<organism>
    <name type="scientific">Oryza sativa subsp. japonica</name>
    <name type="common">Rice</name>
    <dbReference type="NCBI Taxonomy" id="39947"/>
    <lineage>
        <taxon>Eukaryota</taxon>
        <taxon>Viridiplantae</taxon>
        <taxon>Streptophyta</taxon>
        <taxon>Embryophyta</taxon>
        <taxon>Tracheophyta</taxon>
        <taxon>Spermatophyta</taxon>
        <taxon>Magnoliopsida</taxon>
        <taxon>Liliopsida</taxon>
        <taxon>Poales</taxon>
        <taxon>Poaceae</taxon>
        <taxon>BOP clade</taxon>
        <taxon>Oryzoideae</taxon>
        <taxon>Oryzeae</taxon>
        <taxon>Oryzinae</taxon>
        <taxon>Oryza</taxon>
        <taxon>Oryza sativa</taxon>
    </lineage>
</organism>
<dbReference type="EC" id="3.2.1.4"/>
<dbReference type="EMBL" id="AP005319">
    <property type="protein sequence ID" value="BAD16147.1"/>
    <property type="molecule type" value="Genomic_DNA"/>
</dbReference>
<dbReference type="EMBL" id="AP008208">
    <property type="protein sequence ID" value="BAF09947.1"/>
    <property type="molecule type" value="Genomic_DNA"/>
</dbReference>
<dbReference type="EMBL" id="AP014958">
    <property type="protein sequence ID" value="BAS80777.1"/>
    <property type="molecule type" value="Genomic_DNA"/>
</dbReference>
<dbReference type="EMBL" id="AK101108">
    <property type="protein sequence ID" value="BAG94917.1"/>
    <property type="molecule type" value="mRNA"/>
</dbReference>
<dbReference type="EMBL" id="AK105446">
    <property type="protein sequence ID" value="BAG97254.1"/>
    <property type="molecule type" value="mRNA"/>
</dbReference>
<dbReference type="RefSeq" id="XP_015625116.1">
    <property type="nucleotide sequence ID" value="XM_015769630.1"/>
</dbReference>
<dbReference type="SMR" id="Q6Z2J3"/>
<dbReference type="FunCoup" id="Q6Z2J3">
    <property type="interactions" value="158"/>
</dbReference>
<dbReference type="STRING" id="39947.Q6Z2J3"/>
<dbReference type="CAZy" id="GH9">
    <property type="family name" value="Glycoside Hydrolase Family 9"/>
</dbReference>
<dbReference type="PaxDb" id="39947-Q6Z2J3"/>
<dbReference type="EnsemblPlants" id="Os02t0733300-01">
    <property type="protein sequence ID" value="Os02t0733300-01"/>
    <property type="gene ID" value="Os02g0733300"/>
</dbReference>
<dbReference type="Gramene" id="Os02t0733300-01">
    <property type="protein sequence ID" value="Os02t0733300-01"/>
    <property type="gene ID" value="Os02g0733300"/>
</dbReference>
<dbReference type="KEGG" id="dosa:Os02g0733300"/>
<dbReference type="eggNOG" id="ENOG502QR9R">
    <property type="taxonomic scope" value="Eukaryota"/>
</dbReference>
<dbReference type="HOGENOM" id="CLU_008926_1_2_1"/>
<dbReference type="InParanoid" id="Q6Z2J3"/>
<dbReference type="OMA" id="AFSDHNC"/>
<dbReference type="OrthoDB" id="10257085at2759"/>
<dbReference type="Proteomes" id="UP000000763">
    <property type="component" value="Chromosome 2"/>
</dbReference>
<dbReference type="Proteomes" id="UP000059680">
    <property type="component" value="Chromosome 2"/>
</dbReference>
<dbReference type="GO" id="GO:0005576">
    <property type="term" value="C:extracellular region"/>
    <property type="evidence" value="ECO:0007669"/>
    <property type="project" value="UniProtKB-SubCell"/>
</dbReference>
<dbReference type="GO" id="GO:0008810">
    <property type="term" value="F:cellulase activity"/>
    <property type="evidence" value="ECO:0007669"/>
    <property type="project" value="UniProtKB-EC"/>
</dbReference>
<dbReference type="GO" id="GO:0071555">
    <property type="term" value="P:cell wall organization"/>
    <property type="evidence" value="ECO:0007669"/>
    <property type="project" value="UniProtKB-KW"/>
</dbReference>
<dbReference type="GO" id="GO:0030245">
    <property type="term" value="P:cellulose catabolic process"/>
    <property type="evidence" value="ECO:0007669"/>
    <property type="project" value="UniProtKB-KW"/>
</dbReference>
<dbReference type="FunFam" id="1.50.10.10:FF:000020">
    <property type="entry name" value="Endoglucanase"/>
    <property type="match status" value="1"/>
</dbReference>
<dbReference type="Gene3D" id="1.50.10.10">
    <property type="match status" value="1"/>
</dbReference>
<dbReference type="InterPro" id="IPR008928">
    <property type="entry name" value="6-hairpin_glycosidase_sf"/>
</dbReference>
<dbReference type="InterPro" id="IPR012341">
    <property type="entry name" value="6hp_glycosidase-like_sf"/>
</dbReference>
<dbReference type="InterPro" id="IPR001701">
    <property type="entry name" value="Glyco_hydro_9"/>
</dbReference>
<dbReference type="InterPro" id="IPR033126">
    <property type="entry name" value="Glyco_hydro_9_Asp/Glu_AS"/>
</dbReference>
<dbReference type="InterPro" id="IPR018221">
    <property type="entry name" value="Glyco_hydro_9_His_AS"/>
</dbReference>
<dbReference type="PANTHER" id="PTHR22298">
    <property type="entry name" value="ENDO-1,4-BETA-GLUCANASE"/>
    <property type="match status" value="1"/>
</dbReference>
<dbReference type="Pfam" id="PF00759">
    <property type="entry name" value="Glyco_hydro_9"/>
    <property type="match status" value="1"/>
</dbReference>
<dbReference type="SUPFAM" id="SSF48208">
    <property type="entry name" value="Six-hairpin glycosidases"/>
    <property type="match status" value="1"/>
</dbReference>
<dbReference type="PROSITE" id="PS60032">
    <property type="entry name" value="GH9_1"/>
    <property type="match status" value="1"/>
</dbReference>
<dbReference type="PROSITE" id="PS00592">
    <property type="entry name" value="GH9_2"/>
    <property type="match status" value="1"/>
</dbReference>
<dbReference type="PROSITE" id="PS00698">
    <property type="entry name" value="GH9_3"/>
    <property type="match status" value="1"/>
</dbReference>
<reference key="1">
    <citation type="journal article" date="2005" name="Nature">
        <title>The map-based sequence of the rice genome.</title>
        <authorList>
            <consortium name="International rice genome sequencing project (IRGSP)"/>
        </authorList>
    </citation>
    <scope>NUCLEOTIDE SEQUENCE [LARGE SCALE GENOMIC DNA]</scope>
    <source>
        <strain>cv. Nipponbare</strain>
    </source>
</reference>
<reference key="2">
    <citation type="journal article" date="2008" name="Nucleic Acids Res.">
        <title>The rice annotation project database (RAP-DB): 2008 update.</title>
        <authorList>
            <consortium name="The rice annotation project (RAP)"/>
        </authorList>
    </citation>
    <scope>GENOME REANNOTATION</scope>
    <source>
        <strain>cv. Nipponbare</strain>
    </source>
</reference>
<reference key="3">
    <citation type="journal article" date="2013" name="Rice">
        <title>Improvement of the Oryza sativa Nipponbare reference genome using next generation sequence and optical map data.</title>
        <authorList>
            <person name="Kawahara Y."/>
            <person name="de la Bastide M."/>
            <person name="Hamilton J.P."/>
            <person name="Kanamori H."/>
            <person name="McCombie W.R."/>
            <person name="Ouyang S."/>
            <person name="Schwartz D.C."/>
            <person name="Tanaka T."/>
            <person name="Wu J."/>
            <person name="Zhou S."/>
            <person name="Childs K.L."/>
            <person name="Davidson R.M."/>
            <person name="Lin H."/>
            <person name="Quesada-Ocampo L."/>
            <person name="Vaillancourt B."/>
            <person name="Sakai H."/>
            <person name="Lee S.S."/>
            <person name="Kim J."/>
            <person name="Numa H."/>
            <person name="Itoh T."/>
            <person name="Buell C.R."/>
            <person name="Matsumoto T."/>
        </authorList>
    </citation>
    <scope>GENOME REANNOTATION</scope>
    <source>
        <strain>cv. Nipponbare</strain>
    </source>
</reference>
<reference key="4">
    <citation type="journal article" date="2003" name="Science">
        <title>Collection, mapping, and annotation of over 28,000 cDNA clones from japonica rice.</title>
        <authorList>
            <consortium name="The rice full-length cDNA consortium"/>
        </authorList>
    </citation>
    <scope>NUCLEOTIDE SEQUENCE [LARGE SCALE MRNA]</scope>
    <source>
        <strain>cv. Nipponbare</strain>
    </source>
</reference>
<reference key="5">
    <citation type="journal article" date="2006" name="Plant Cell Physiol.">
        <title>Carbohydrate-binding module of a rice endo-beta-1,4-glycanase, OsCel9A, expressed in auxin-induced lateral root primordia, is post-translationally truncated.</title>
        <authorList>
            <person name="Yoshida K."/>
            <person name="Imaizumi N."/>
            <person name="Kaneko S."/>
            <person name="Kawagoe Y."/>
            <person name="Tagiri A."/>
            <person name="Tanaka H."/>
            <person name="Nishitani K."/>
            <person name="Komae K."/>
        </authorList>
    </citation>
    <scope>INDUCTION</scope>
</reference>
<proteinExistence type="evidence at transcript level"/>
<gene>
    <name type="ordered locus">Os02g0733300</name>
    <name type="ordered locus">LOC_Os02g50040</name>
    <name type="ORF">P0643A10.32</name>
</gene>
<sequence>MLAASLRVEAVAVVAAAVLVLLLSPAAVVVVAGQHDYGDALHKSILFFEGQRSGRLPPDQRLRWRRDSGLHDGAAASVDLTGGYYDAGDNVKFGFPMAFTATLMSWGLIDFGRSFGPHKEEARKAVRWATDYLMKATAKPNTVYVQVGDAFRDHSCWERPEDMDTPRTVYKVDPSHPGSDVAAETAAALAAGSIVFRDADPAYSKRLLDRAIAVFEFADKYRGPYSSSLHDAVCPCYCDFSGYKDELLWGAAWLHKASRRREYREYIKKNEVVLGASESINEFGWDNKHAGINVLISKEVLMGKDEYFQSFRVNADNFMCSLLPGISNHPQIQYSPGGLLFKVGGSNMQHVTSLSFLLLAYSNYLSHAGARVSCGAGGSASPTQLRRVAKRQVDYILGDNPLRMSYMVGYGARFPRRIHHRGSSLPSVAAHPARIGCKGGAAYYASAAPNPNLLVGAVVGGPSDATDAFPDARAVFQQSEPTTYINAPLMGLLAYFSAHPNPAEWADD</sequence>
<feature type="signal peptide" evidence="2">
    <location>
        <begin position="1"/>
        <end position="33"/>
    </location>
</feature>
<feature type="chain" id="PRO_0000249283" description="Endoglucanase 6">
    <location>
        <begin position="34"/>
        <end position="508"/>
    </location>
</feature>
<feature type="active site" description="Nucleophile" evidence="5">
    <location>
        <position position="89"/>
    </location>
</feature>
<feature type="active site" evidence="3">
    <location>
        <position position="419"/>
    </location>
</feature>
<feature type="active site" evidence="4">
    <location>
        <position position="471"/>
    </location>
</feature>
<feature type="active site" evidence="4">
    <location>
        <position position="480"/>
    </location>
</feature>
<keyword id="KW-0119">Carbohydrate metabolism</keyword>
<keyword id="KW-0961">Cell wall biogenesis/degradation</keyword>
<keyword id="KW-0136">Cellulose degradation</keyword>
<keyword id="KW-0326">Glycosidase</keyword>
<keyword id="KW-0378">Hydrolase</keyword>
<keyword id="KW-0624">Polysaccharide degradation</keyword>
<keyword id="KW-1185">Reference proteome</keyword>
<keyword id="KW-0964">Secreted</keyword>
<keyword id="KW-0732">Signal</keyword>
<comment type="catalytic activity">
    <reaction>
        <text>Endohydrolysis of (1-&gt;4)-beta-D-glucosidic linkages in cellulose, lichenin and cereal beta-D-glucans.</text>
        <dbReference type="EC" id="3.2.1.4"/>
    </reaction>
</comment>
<comment type="subcellular location">
    <subcellularLocation>
        <location evidence="1">Secreted</location>
    </subcellularLocation>
</comment>
<comment type="induction">
    <text evidence="6">By auxin in roots.</text>
</comment>
<comment type="similarity">
    <text evidence="5 7">Belongs to the glycosyl hydrolase 9 (cellulase E) family.</text>
</comment>
<accession>Q6Z2J3</accession>
<accession>A0A0N7KG18</accession>
<accession>Q0DXU1</accession>
<protein>
    <recommendedName>
        <fullName>Endoglucanase 6</fullName>
        <ecNumber>3.2.1.4</ecNumber>
    </recommendedName>
    <alternativeName>
        <fullName>Endo-1,4-beta glucanase 6</fullName>
    </alternativeName>
    <alternativeName>
        <fullName>OsCel9E</fullName>
    </alternativeName>
</protein>
<evidence type="ECO:0000250" key="1"/>
<evidence type="ECO:0000255" key="2"/>
<evidence type="ECO:0000255" key="3">
    <source>
        <dbReference type="PROSITE-ProRule" id="PRU10059"/>
    </source>
</evidence>
<evidence type="ECO:0000255" key="4">
    <source>
        <dbReference type="PROSITE-ProRule" id="PRU10060"/>
    </source>
</evidence>
<evidence type="ECO:0000255" key="5">
    <source>
        <dbReference type="PROSITE-ProRule" id="PRU10140"/>
    </source>
</evidence>
<evidence type="ECO:0000269" key="6">
    <source>
    </source>
</evidence>
<evidence type="ECO:0000305" key="7"/>
<name>GUN6_ORYSJ</name>